<accession>Q182F0</accession>
<reference key="1">
    <citation type="journal article" date="2006" name="Nat. Genet.">
        <title>The multidrug-resistant human pathogen Clostridium difficile has a highly mobile, mosaic genome.</title>
        <authorList>
            <person name="Sebaihia M."/>
            <person name="Wren B.W."/>
            <person name="Mullany P."/>
            <person name="Fairweather N.F."/>
            <person name="Minton N."/>
            <person name="Stabler R."/>
            <person name="Thomson N.R."/>
            <person name="Roberts A.P."/>
            <person name="Cerdeno-Tarraga A.M."/>
            <person name="Wang H."/>
            <person name="Holden M.T.G."/>
            <person name="Wright A."/>
            <person name="Churcher C."/>
            <person name="Quail M.A."/>
            <person name="Baker S."/>
            <person name="Bason N."/>
            <person name="Brooks K."/>
            <person name="Chillingworth T."/>
            <person name="Cronin A."/>
            <person name="Davis P."/>
            <person name="Dowd L."/>
            <person name="Fraser A."/>
            <person name="Feltwell T."/>
            <person name="Hance Z."/>
            <person name="Holroyd S."/>
            <person name="Jagels K."/>
            <person name="Moule S."/>
            <person name="Mungall K."/>
            <person name="Price C."/>
            <person name="Rabbinowitsch E."/>
            <person name="Sharp S."/>
            <person name="Simmonds M."/>
            <person name="Stevens K."/>
            <person name="Unwin L."/>
            <person name="Whithead S."/>
            <person name="Dupuy B."/>
            <person name="Dougan G."/>
            <person name="Barrell B."/>
            <person name="Parkhill J."/>
        </authorList>
    </citation>
    <scope>NUCLEOTIDE SEQUENCE [LARGE SCALE GENOMIC DNA]</scope>
    <source>
        <strain>630</strain>
    </source>
</reference>
<sequence>MELNERKLNILKAIVKDYIETAEAIGSRTISKRHDLGVSAATIRNEMADLEELGYLIQPHTSAGRVPSEKGYKLYVNSLMSKSELDDNDKILIEQCMNHNINHIKELIHETSKLLSQLTNYTTVAVTKSLINQSVIKHIQLVAMNDNNILLIVVTDKGDLKKANLTTNVYLDQSKLNLISDNLTRKLLGKSITDLDDNLIAFIKYEISEYSGLIDELLNALNSNMKEEDFSLSLNGATNIFSYPEFNDVLKAKSFLNMLEKKETIADIIKSKGIQKDNLNIIIGSDNDCELAQDCSIVTATYNVDRDLVGRISFIGPTRMDYARIYSIINYMSLLINRK</sequence>
<keyword id="KW-1185">Reference proteome</keyword>
<keyword id="KW-0678">Repressor</keyword>
<keyword id="KW-0346">Stress response</keyword>
<keyword id="KW-0804">Transcription</keyword>
<keyword id="KW-0805">Transcription regulation</keyword>
<name>HRCA_CLOD6</name>
<dbReference type="EMBL" id="AM180355">
    <property type="protein sequence ID" value="CAJ69350.1"/>
    <property type="molecule type" value="Genomic_DNA"/>
</dbReference>
<dbReference type="RefSeq" id="WP_004454754.1">
    <property type="nucleotide sequence ID" value="NZ_JAUPES010000003.1"/>
</dbReference>
<dbReference type="RefSeq" id="YP_001088977.1">
    <property type="nucleotide sequence ID" value="NC_009089.1"/>
</dbReference>
<dbReference type="SMR" id="Q182F0"/>
<dbReference type="STRING" id="272563.CD630_24630"/>
<dbReference type="DNASU" id="4916453"/>
<dbReference type="EnsemblBacteria" id="CAJ69350">
    <property type="protein sequence ID" value="CAJ69350"/>
    <property type="gene ID" value="CD630_24630"/>
</dbReference>
<dbReference type="GeneID" id="66354861"/>
<dbReference type="KEGG" id="cdf:CD630_24630"/>
<dbReference type="KEGG" id="pdc:CDIF630_02709"/>
<dbReference type="PATRIC" id="fig|272563.120.peg.2602"/>
<dbReference type="eggNOG" id="COG1420">
    <property type="taxonomic scope" value="Bacteria"/>
</dbReference>
<dbReference type="OrthoDB" id="9783139at2"/>
<dbReference type="PhylomeDB" id="Q182F0"/>
<dbReference type="BioCyc" id="PDIF272563:G12WB-2618-MONOMER"/>
<dbReference type="Proteomes" id="UP000001978">
    <property type="component" value="Chromosome"/>
</dbReference>
<dbReference type="GO" id="GO:0003677">
    <property type="term" value="F:DNA binding"/>
    <property type="evidence" value="ECO:0007669"/>
    <property type="project" value="InterPro"/>
</dbReference>
<dbReference type="GO" id="GO:0045892">
    <property type="term" value="P:negative regulation of DNA-templated transcription"/>
    <property type="evidence" value="ECO:0007669"/>
    <property type="project" value="UniProtKB-UniRule"/>
</dbReference>
<dbReference type="FunFam" id="1.10.10.10:FF:000049">
    <property type="entry name" value="Heat-inducible transcription repressor HrcA"/>
    <property type="match status" value="1"/>
</dbReference>
<dbReference type="Gene3D" id="3.30.450.40">
    <property type="match status" value="1"/>
</dbReference>
<dbReference type="Gene3D" id="3.30.390.60">
    <property type="entry name" value="Heat-inducible transcription repressor hrca homolog, domain 3"/>
    <property type="match status" value="1"/>
</dbReference>
<dbReference type="Gene3D" id="1.10.10.10">
    <property type="entry name" value="Winged helix-like DNA-binding domain superfamily/Winged helix DNA-binding domain"/>
    <property type="match status" value="1"/>
</dbReference>
<dbReference type="HAMAP" id="MF_00081">
    <property type="entry name" value="HrcA"/>
    <property type="match status" value="1"/>
</dbReference>
<dbReference type="InterPro" id="IPR029016">
    <property type="entry name" value="GAF-like_dom_sf"/>
</dbReference>
<dbReference type="InterPro" id="IPR002571">
    <property type="entry name" value="HrcA"/>
</dbReference>
<dbReference type="InterPro" id="IPR021153">
    <property type="entry name" value="HrcA_C"/>
</dbReference>
<dbReference type="InterPro" id="IPR036388">
    <property type="entry name" value="WH-like_DNA-bd_sf"/>
</dbReference>
<dbReference type="InterPro" id="IPR036390">
    <property type="entry name" value="WH_DNA-bd_sf"/>
</dbReference>
<dbReference type="InterPro" id="IPR023120">
    <property type="entry name" value="WHTH_transcript_rep_HrcA_IDD"/>
</dbReference>
<dbReference type="NCBIfam" id="TIGR00331">
    <property type="entry name" value="hrcA"/>
    <property type="match status" value="1"/>
</dbReference>
<dbReference type="PANTHER" id="PTHR34824">
    <property type="entry name" value="HEAT-INDUCIBLE TRANSCRIPTION REPRESSOR HRCA"/>
    <property type="match status" value="1"/>
</dbReference>
<dbReference type="PANTHER" id="PTHR34824:SF1">
    <property type="entry name" value="HEAT-INDUCIBLE TRANSCRIPTION REPRESSOR HRCA"/>
    <property type="match status" value="1"/>
</dbReference>
<dbReference type="Pfam" id="PF01628">
    <property type="entry name" value="HrcA"/>
    <property type="match status" value="1"/>
</dbReference>
<dbReference type="PIRSF" id="PIRSF005485">
    <property type="entry name" value="HrcA"/>
    <property type="match status" value="1"/>
</dbReference>
<dbReference type="SUPFAM" id="SSF55781">
    <property type="entry name" value="GAF domain-like"/>
    <property type="match status" value="1"/>
</dbReference>
<dbReference type="SUPFAM" id="SSF46785">
    <property type="entry name" value="Winged helix' DNA-binding domain"/>
    <property type="match status" value="1"/>
</dbReference>
<protein>
    <recommendedName>
        <fullName evidence="1">Heat-inducible transcription repressor HrcA</fullName>
    </recommendedName>
</protein>
<comment type="function">
    <text evidence="1">Negative regulator of class I heat shock genes (grpE-dnaK-dnaJ and groELS operons). Prevents heat-shock induction of these operons.</text>
</comment>
<comment type="similarity">
    <text evidence="1">Belongs to the HrcA family.</text>
</comment>
<gene>
    <name evidence="1" type="primary">hrcA</name>
    <name type="ordered locus">CD630_24630</name>
</gene>
<feature type="chain" id="PRO_1000010398" description="Heat-inducible transcription repressor HrcA">
    <location>
        <begin position="1"/>
        <end position="339"/>
    </location>
</feature>
<evidence type="ECO:0000255" key="1">
    <source>
        <dbReference type="HAMAP-Rule" id="MF_00081"/>
    </source>
</evidence>
<organism>
    <name type="scientific">Clostridioides difficile (strain 630)</name>
    <name type="common">Peptoclostridium difficile</name>
    <dbReference type="NCBI Taxonomy" id="272563"/>
    <lineage>
        <taxon>Bacteria</taxon>
        <taxon>Bacillati</taxon>
        <taxon>Bacillota</taxon>
        <taxon>Clostridia</taxon>
        <taxon>Peptostreptococcales</taxon>
        <taxon>Peptostreptococcaceae</taxon>
        <taxon>Clostridioides</taxon>
    </lineage>
</organism>
<proteinExistence type="inferred from homology"/>